<protein>
    <recommendedName>
        <fullName evidence="2">Transcription and mRNA export factor ENY2-1</fullName>
    </recommendedName>
    <alternativeName>
        <fullName evidence="2">Enhancer of yellow 2 transcription factor homolog A</fullName>
    </alternativeName>
</protein>
<accession>B5XC71</accession>
<accession>B5X8H8</accession>
<evidence type="ECO:0000250" key="1"/>
<evidence type="ECO:0000255" key="2">
    <source>
        <dbReference type="HAMAP-Rule" id="MF_03046"/>
    </source>
</evidence>
<evidence type="ECO:0000305" key="3"/>
<reference key="1">
    <citation type="journal article" date="2010" name="BMC Genomics">
        <title>Salmo salar and Esox lucius full-length cDNA sequences reveal changes in evolutionary pressures on a post-tetraploidization genome.</title>
        <authorList>
            <person name="Leong J.S."/>
            <person name="Jantzen S.G."/>
            <person name="von Schalburg K.R."/>
            <person name="Cooper G.A."/>
            <person name="Messmer A.M."/>
            <person name="Liao N.Y."/>
            <person name="Munro S."/>
            <person name="Moore R."/>
            <person name="Holt R.A."/>
            <person name="Jones S.J."/>
            <person name="Davidson W.S."/>
            <person name="Koop B.F."/>
        </authorList>
    </citation>
    <scope>NUCLEOTIDE SEQUENCE [LARGE SCALE MRNA]</scope>
    <source>
        <tissue>Brain</tissue>
    </source>
</reference>
<sequence>MSKDSKMRATINQKLTEMGERERLKELLRAKLTECGWRDQLKALCKDVIKEKGLEHATVEDLVVEITPKGRVLVPDSVKRELLQRIRAFLAQHAT</sequence>
<organism>
    <name type="scientific">Salmo salar</name>
    <name type="common">Atlantic salmon</name>
    <dbReference type="NCBI Taxonomy" id="8030"/>
    <lineage>
        <taxon>Eukaryota</taxon>
        <taxon>Metazoa</taxon>
        <taxon>Chordata</taxon>
        <taxon>Craniata</taxon>
        <taxon>Vertebrata</taxon>
        <taxon>Euteleostomi</taxon>
        <taxon>Actinopterygii</taxon>
        <taxon>Neopterygii</taxon>
        <taxon>Teleostei</taxon>
        <taxon>Protacanthopterygii</taxon>
        <taxon>Salmoniformes</taxon>
        <taxon>Salmonidae</taxon>
        <taxon>Salmoninae</taxon>
        <taxon>Salmo</taxon>
    </lineage>
</organism>
<gene>
    <name type="primary">eny2-1</name>
</gene>
<feature type="chain" id="PRO_0000367547" description="Transcription and mRNA export factor ENY2-1">
    <location>
        <begin position="1"/>
        <end position="95"/>
    </location>
</feature>
<feature type="sequence conflict" description="In Ref. 1; ACI67148." evidence="3" ref="1">
    <original>A</original>
    <variation>V</variation>
    <location>
        <position position="57"/>
    </location>
</feature>
<feature type="sequence conflict" description="In Ref. 1; ACI67148." evidence="3" ref="1">
    <original>R</original>
    <variation>K</variation>
    <location>
        <position position="80"/>
    </location>
</feature>
<dbReference type="EMBL" id="BT047347">
    <property type="protein sequence ID" value="ACI67148.1"/>
    <property type="molecule type" value="mRNA"/>
</dbReference>
<dbReference type="EMBL" id="BT048640">
    <property type="protein sequence ID" value="ACI68441.1"/>
    <property type="molecule type" value="mRNA"/>
</dbReference>
<dbReference type="SMR" id="B5XC71"/>
<dbReference type="GeneID" id="106583768"/>
<dbReference type="KEGG" id="sasa:106583768"/>
<dbReference type="OrthoDB" id="456095at7898"/>
<dbReference type="Proteomes" id="UP000087266">
    <property type="component" value="Chromosome ssa02"/>
</dbReference>
<dbReference type="GO" id="GO:0071819">
    <property type="term" value="C:DUBm complex"/>
    <property type="evidence" value="ECO:0007669"/>
    <property type="project" value="UniProtKB-UniRule"/>
</dbReference>
<dbReference type="GO" id="GO:0005643">
    <property type="term" value="C:nuclear pore"/>
    <property type="evidence" value="ECO:0007669"/>
    <property type="project" value="UniProtKB-UniRule"/>
</dbReference>
<dbReference type="GO" id="GO:0005654">
    <property type="term" value="C:nucleoplasm"/>
    <property type="evidence" value="ECO:0007669"/>
    <property type="project" value="UniProtKB-SubCell"/>
</dbReference>
<dbReference type="GO" id="GO:0000124">
    <property type="term" value="C:SAGA complex"/>
    <property type="evidence" value="ECO:0000250"/>
    <property type="project" value="UniProtKB"/>
</dbReference>
<dbReference type="GO" id="GO:0070390">
    <property type="term" value="C:transcription export complex 2"/>
    <property type="evidence" value="ECO:0007669"/>
    <property type="project" value="UniProtKB-UniRule"/>
</dbReference>
<dbReference type="GO" id="GO:0003713">
    <property type="term" value="F:transcription coactivator activity"/>
    <property type="evidence" value="ECO:0000250"/>
    <property type="project" value="UniProtKB"/>
</dbReference>
<dbReference type="GO" id="GO:0006325">
    <property type="term" value="P:chromatin organization"/>
    <property type="evidence" value="ECO:0007669"/>
    <property type="project" value="UniProtKB-KW"/>
</dbReference>
<dbReference type="GO" id="GO:0006406">
    <property type="term" value="P:mRNA export from nucleus"/>
    <property type="evidence" value="ECO:0007669"/>
    <property type="project" value="UniProtKB-UniRule"/>
</dbReference>
<dbReference type="GO" id="GO:0045893">
    <property type="term" value="P:positive regulation of DNA-templated transcription"/>
    <property type="evidence" value="ECO:0000250"/>
    <property type="project" value="UniProtKB"/>
</dbReference>
<dbReference type="GO" id="GO:0015031">
    <property type="term" value="P:protein transport"/>
    <property type="evidence" value="ECO:0007669"/>
    <property type="project" value="UniProtKB-KW"/>
</dbReference>
<dbReference type="GO" id="GO:0006368">
    <property type="term" value="P:transcription elongation by RNA polymerase II"/>
    <property type="evidence" value="ECO:0007669"/>
    <property type="project" value="UniProtKB-UniRule"/>
</dbReference>
<dbReference type="FunFam" id="1.10.246.140:FF:000001">
    <property type="entry name" value="Transcription and mRNA export factor ENY2"/>
    <property type="match status" value="1"/>
</dbReference>
<dbReference type="Gene3D" id="1.10.246.140">
    <property type="match status" value="1"/>
</dbReference>
<dbReference type="HAMAP" id="MF_03046">
    <property type="entry name" value="ENY2_Sus1"/>
    <property type="match status" value="1"/>
</dbReference>
<dbReference type="InterPro" id="IPR018783">
    <property type="entry name" value="TF_ENY2"/>
</dbReference>
<dbReference type="InterPro" id="IPR038212">
    <property type="entry name" value="TF_EnY2_sf"/>
</dbReference>
<dbReference type="PANTHER" id="PTHR12514">
    <property type="entry name" value="ENHANCER OF YELLOW 2 TRANSCRIPTION FACTOR"/>
    <property type="match status" value="1"/>
</dbReference>
<dbReference type="Pfam" id="PF10163">
    <property type="entry name" value="EnY2"/>
    <property type="match status" value="1"/>
</dbReference>
<name>ENY2A_SALSA</name>
<keyword id="KW-0010">Activator</keyword>
<keyword id="KW-0156">Chromatin regulator</keyword>
<keyword id="KW-0509">mRNA transport</keyword>
<keyword id="KW-0539">Nucleus</keyword>
<keyword id="KW-0653">Protein transport</keyword>
<keyword id="KW-1185">Reference proteome</keyword>
<keyword id="KW-0804">Transcription</keyword>
<keyword id="KW-0805">Transcription regulation</keyword>
<keyword id="KW-0811">Translocation</keyword>
<keyword id="KW-0813">Transport</keyword>
<proteinExistence type="inferred from homology"/>
<comment type="function">
    <text evidence="1">Involved in mRNA export coupled transcription activation by association with both the TREX-2 and the SAGA complexes. The transcription regulatory histone acetylation (HAT) complex SAGA is a multiprotein complex that activates transcription by remodeling chromatin and mediating histone acetylation and deubiquitination. Within the SAGA complex, participates in a subcomplex that specifically deubiquitinates histones. The SAGA complex is recruited to specific gene promoters by activators, where it is required for transcription. The TREX-2 complex functions in docking export-competent ribonucleoprotein particles (mRNPs) to the nuclear entrance of the nuclear pore complex (nuclear basket). TREX-2 participates in mRNA export and accurate chromatin positioning in the nucleus by tethering genes to the nuclear periphery (By similarity).</text>
</comment>
<comment type="subunit">
    <text evidence="1">Component of the nuclear pore complex (NPC)-associated TREX-2 complex (transcription and export complex 2). Component of the SAGA transcription coactivator-HAT complex. Within the SAGA complex, participates in a subcomplex of SAGA called the DUB module (deubiquitination module) (By similarity).</text>
</comment>
<comment type="subcellular location">
    <subcellularLocation>
        <location evidence="2">Nucleus</location>
        <location evidence="2">Nucleoplasm</location>
    </subcellularLocation>
</comment>
<comment type="similarity">
    <text evidence="2">Belongs to the ENY2 family.</text>
</comment>